<proteinExistence type="inferred from homology"/>
<evidence type="ECO:0000255" key="1">
    <source>
        <dbReference type="HAMAP-Rule" id="MF_00105"/>
    </source>
</evidence>
<protein>
    <recommendedName>
        <fullName evidence="1">Transcription elongation factor GreA</fullName>
    </recommendedName>
    <alternativeName>
        <fullName evidence="1">Transcript cleavage factor GreA</fullName>
    </alternativeName>
</protein>
<reference key="1">
    <citation type="journal article" date="1999" name="Nature">
        <title>Evidence for lateral gene transfer between Archaea and Bacteria from genome sequence of Thermotoga maritima.</title>
        <authorList>
            <person name="Nelson K.E."/>
            <person name="Clayton R.A."/>
            <person name="Gill S.R."/>
            <person name="Gwinn M.L."/>
            <person name="Dodson R.J."/>
            <person name="Haft D.H."/>
            <person name="Hickey E.K."/>
            <person name="Peterson J.D."/>
            <person name="Nelson W.C."/>
            <person name="Ketchum K.A."/>
            <person name="McDonald L.A."/>
            <person name="Utterback T.R."/>
            <person name="Malek J.A."/>
            <person name="Linher K.D."/>
            <person name="Garrett M.M."/>
            <person name="Stewart A.M."/>
            <person name="Cotton M.D."/>
            <person name="Pratt M.S."/>
            <person name="Phillips C.A."/>
            <person name="Richardson D.L."/>
            <person name="Heidelberg J.F."/>
            <person name="Sutton G.G."/>
            <person name="Fleischmann R.D."/>
            <person name="Eisen J.A."/>
            <person name="White O."/>
            <person name="Salzberg S.L."/>
            <person name="Smith H.O."/>
            <person name="Venter J.C."/>
            <person name="Fraser C.M."/>
        </authorList>
    </citation>
    <scope>NUCLEOTIDE SEQUENCE [LARGE SCALE GENOMIC DNA]</scope>
    <source>
        <strain>ATCC 43589 / DSM 3109 / JCM 10099 / NBRC 100826 / MSB8</strain>
    </source>
</reference>
<sequence length="156" mass="17848">MKKVRLTREGYEKLKKELEDLKRKFMYEISERIKEARELGDLSENSEYEAAKNEQGRVGSRIMEIEQILSNAEIIEDSEESDEVTLGKWVVIKNLDTGEEHKFRIVTPQEADFFAQKLSSDSPLGKSLLGRKVGDVVKVKAPSGVQRYQVIAVMNK</sequence>
<gene>
    <name evidence="1" type="primary">greA</name>
    <name type="ordered locus">TM_1706</name>
</gene>
<comment type="function">
    <text evidence="1">Necessary for efficient RNA polymerase transcription elongation past template-encoded arresting sites. The arresting sites in DNA have the property of trapping a certain fraction of elongating RNA polymerases that pass through, resulting in locked ternary complexes. Cleavage of the nascent transcript by cleavage factors such as GreA or GreB allows the resumption of elongation from the new 3'terminus. GreA releases sequences of 2 to 3 nucleotides.</text>
</comment>
<comment type="similarity">
    <text evidence="1">Belongs to the GreA/GreB family.</text>
</comment>
<dbReference type="EMBL" id="AE000512">
    <property type="protein sequence ID" value="AAD36773.1"/>
    <property type="molecule type" value="Genomic_DNA"/>
</dbReference>
<dbReference type="PIR" id="D72221">
    <property type="entry name" value="D72221"/>
</dbReference>
<dbReference type="RefSeq" id="NP_229506.1">
    <property type="nucleotide sequence ID" value="NC_000853.1"/>
</dbReference>
<dbReference type="RefSeq" id="WP_004082222.1">
    <property type="nucleotide sequence ID" value="NZ_CP011107.1"/>
</dbReference>
<dbReference type="SMR" id="Q9X232"/>
<dbReference type="FunCoup" id="Q9X232">
    <property type="interactions" value="247"/>
</dbReference>
<dbReference type="STRING" id="243274.TM_1706"/>
<dbReference type="PaxDb" id="243274-THEMA_05710"/>
<dbReference type="EnsemblBacteria" id="AAD36773">
    <property type="protein sequence ID" value="AAD36773"/>
    <property type="gene ID" value="TM_1706"/>
</dbReference>
<dbReference type="KEGG" id="tma:TM1706"/>
<dbReference type="KEGG" id="tmi:THEMA_05710"/>
<dbReference type="KEGG" id="tmm:Tmari_1714"/>
<dbReference type="KEGG" id="tmw:THMA_1748"/>
<dbReference type="eggNOG" id="COG0782">
    <property type="taxonomic scope" value="Bacteria"/>
</dbReference>
<dbReference type="InParanoid" id="Q9X232"/>
<dbReference type="OrthoDB" id="9808774at2"/>
<dbReference type="Proteomes" id="UP000008183">
    <property type="component" value="Chromosome"/>
</dbReference>
<dbReference type="GO" id="GO:0003677">
    <property type="term" value="F:DNA binding"/>
    <property type="evidence" value="ECO:0007669"/>
    <property type="project" value="UniProtKB-UniRule"/>
</dbReference>
<dbReference type="GO" id="GO:0070063">
    <property type="term" value="F:RNA polymerase binding"/>
    <property type="evidence" value="ECO:0007669"/>
    <property type="project" value="InterPro"/>
</dbReference>
<dbReference type="GO" id="GO:0006354">
    <property type="term" value="P:DNA-templated transcription elongation"/>
    <property type="evidence" value="ECO:0000318"/>
    <property type="project" value="GO_Central"/>
</dbReference>
<dbReference type="GO" id="GO:0032784">
    <property type="term" value="P:regulation of DNA-templated transcription elongation"/>
    <property type="evidence" value="ECO:0007669"/>
    <property type="project" value="UniProtKB-UniRule"/>
</dbReference>
<dbReference type="FunFam" id="1.10.287.180:FF:000001">
    <property type="entry name" value="Transcription elongation factor GreA"/>
    <property type="match status" value="1"/>
</dbReference>
<dbReference type="FunFam" id="3.10.50.30:FF:000001">
    <property type="entry name" value="Transcription elongation factor GreA"/>
    <property type="match status" value="1"/>
</dbReference>
<dbReference type="Gene3D" id="3.10.50.30">
    <property type="entry name" value="Transcription elongation factor, GreA/GreB, C-terminal domain"/>
    <property type="match status" value="1"/>
</dbReference>
<dbReference type="Gene3D" id="1.10.287.180">
    <property type="entry name" value="Transcription elongation factor, GreA/GreB, N-terminal domain"/>
    <property type="match status" value="1"/>
</dbReference>
<dbReference type="HAMAP" id="MF_00105">
    <property type="entry name" value="GreA_GreB"/>
    <property type="match status" value="1"/>
</dbReference>
<dbReference type="InterPro" id="IPR036953">
    <property type="entry name" value="GreA/GreB_C_sf"/>
</dbReference>
<dbReference type="InterPro" id="IPR018151">
    <property type="entry name" value="TF_GreA/GreB_CS"/>
</dbReference>
<dbReference type="InterPro" id="IPR006359">
    <property type="entry name" value="Tscrpt_elong_fac_GreA"/>
</dbReference>
<dbReference type="InterPro" id="IPR028624">
    <property type="entry name" value="Tscrpt_elong_fac_GreA/B"/>
</dbReference>
<dbReference type="InterPro" id="IPR001437">
    <property type="entry name" value="Tscrpt_elong_fac_GreA/B_C"/>
</dbReference>
<dbReference type="InterPro" id="IPR023459">
    <property type="entry name" value="Tscrpt_elong_fac_GreA/B_fam"/>
</dbReference>
<dbReference type="InterPro" id="IPR022691">
    <property type="entry name" value="Tscrpt_elong_fac_GreA/B_N"/>
</dbReference>
<dbReference type="InterPro" id="IPR036805">
    <property type="entry name" value="Tscrpt_elong_fac_GreA/B_N_sf"/>
</dbReference>
<dbReference type="NCBIfam" id="TIGR01462">
    <property type="entry name" value="greA"/>
    <property type="match status" value="1"/>
</dbReference>
<dbReference type="NCBIfam" id="NF001263">
    <property type="entry name" value="PRK00226.1-4"/>
    <property type="match status" value="1"/>
</dbReference>
<dbReference type="PANTHER" id="PTHR30437">
    <property type="entry name" value="TRANSCRIPTION ELONGATION FACTOR GREA"/>
    <property type="match status" value="1"/>
</dbReference>
<dbReference type="PANTHER" id="PTHR30437:SF4">
    <property type="entry name" value="TRANSCRIPTION ELONGATION FACTOR GREA"/>
    <property type="match status" value="1"/>
</dbReference>
<dbReference type="Pfam" id="PF01272">
    <property type="entry name" value="GreA_GreB"/>
    <property type="match status" value="1"/>
</dbReference>
<dbReference type="Pfam" id="PF03449">
    <property type="entry name" value="GreA_GreB_N"/>
    <property type="match status" value="1"/>
</dbReference>
<dbReference type="PIRSF" id="PIRSF006092">
    <property type="entry name" value="GreA_GreB"/>
    <property type="match status" value="1"/>
</dbReference>
<dbReference type="SUPFAM" id="SSF54534">
    <property type="entry name" value="FKBP-like"/>
    <property type="match status" value="1"/>
</dbReference>
<dbReference type="SUPFAM" id="SSF46557">
    <property type="entry name" value="GreA transcript cleavage protein, N-terminal domain"/>
    <property type="match status" value="1"/>
</dbReference>
<dbReference type="PROSITE" id="PS00829">
    <property type="entry name" value="GREAB_1"/>
    <property type="match status" value="1"/>
</dbReference>
<dbReference type="PROSITE" id="PS00830">
    <property type="entry name" value="GREAB_2"/>
    <property type="match status" value="1"/>
</dbReference>
<feature type="chain" id="PRO_0000176985" description="Transcription elongation factor GreA">
    <location>
        <begin position="1"/>
        <end position="156"/>
    </location>
</feature>
<feature type="coiled-coil region" evidence="1">
    <location>
        <begin position="1"/>
        <end position="32"/>
    </location>
</feature>
<keyword id="KW-0175">Coiled coil</keyword>
<keyword id="KW-0238">DNA-binding</keyword>
<keyword id="KW-1185">Reference proteome</keyword>
<keyword id="KW-0804">Transcription</keyword>
<keyword id="KW-0805">Transcription regulation</keyword>
<organism>
    <name type="scientific">Thermotoga maritima (strain ATCC 43589 / DSM 3109 / JCM 10099 / NBRC 100826 / MSB8)</name>
    <dbReference type="NCBI Taxonomy" id="243274"/>
    <lineage>
        <taxon>Bacteria</taxon>
        <taxon>Thermotogati</taxon>
        <taxon>Thermotogota</taxon>
        <taxon>Thermotogae</taxon>
        <taxon>Thermotogales</taxon>
        <taxon>Thermotogaceae</taxon>
        <taxon>Thermotoga</taxon>
    </lineage>
</organism>
<name>GREA_THEMA</name>
<accession>Q9X232</accession>